<comment type="function">
    <text evidence="3 5 6">Plays a role in the regulation of lipogenesis in liver. Up-regulates ACACA enzyme activity. Required for efficient lipid biosynthesis, including triacylglycerol, diacylglycerol and phospholipid. Involved in stabilization of microtubules.</text>
</comment>
<comment type="subunit">
    <text evidence="3 5 6">Homodimer in the absence of THRSP. Heterodimer with THRSP. The homodimer interacts with ACACA and ACACB. Promotes polymerization of Acetyl-CoA carboxylase to form complexes that contain MID1IP1 and ACACA and/or ACACB. Interaction with THRSP interferes with ACACA binding.</text>
</comment>
<comment type="interaction">
    <interactant intactId="EBI-473024">
        <id>Q9CQ20</id>
    </interactant>
    <interactant intactId="EBI-773043">
        <id>Q5SWU9</id>
        <label>Acaca</label>
    </interactant>
    <organismsDiffer>false</organismsDiffer>
    <experiments>2</experiments>
</comment>
<comment type="interaction">
    <interactant intactId="EBI-473024">
        <id>Q9CQ20</id>
    </interactant>
    <interactant intactId="EBI-472994">
        <id>O70583</id>
        <label>Mid1</label>
    </interactant>
    <organismsDiffer>false</organismsDiffer>
    <experiments>8</experiments>
</comment>
<comment type="interaction">
    <interactant intactId="EBI-473024">
        <id>Q9CQ20</id>
    </interactant>
    <interactant intactId="EBI-473024">
        <id>Q9CQ20</id>
        <label>Mid1ip1</label>
    </interactant>
    <organismsDiffer>false</organismsDiffer>
    <experiments>3</experiments>
</comment>
<comment type="interaction">
    <interactant intactId="EBI-473024">
        <id>Q9CQ20</id>
    </interactant>
    <interactant intactId="EBI-717681">
        <id>Q13085</id>
        <label>ACACA</label>
    </interactant>
    <organismsDiffer>true</organismsDiffer>
    <experiments>4</experiments>
</comment>
<comment type="interaction">
    <interactant intactId="EBI-473024">
        <id>Q9CQ20</id>
    </interactant>
    <interactant intactId="EBI-2211739">
        <id>O00763</id>
        <label>ACACB</label>
    </interactant>
    <organismsDiffer>true</organismsDiffer>
    <experiments>4</experiments>
</comment>
<comment type="interaction">
    <interactant intactId="EBI-473024">
        <id>Q9CQ20</id>
    </interactant>
    <interactant intactId="EBI-15884821">
        <id>G3H9D1</id>
        <label>I79_006999</label>
    </interactant>
    <organismsDiffer>true</organismsDiffer>
    <experiments>2</experiments>
</comment>
<comment type="subcellular location">
    <subcellularLocation>
        <location evidence="3">Nucleus</location>
    </subcellularLocation>
    <subcellularLocation>
        <location evidence="3 5">Cytoplasm</location>
    </subcellularLocation>
    <subcellularLocation>
        <location evidence="3">Cytoplasm</location>
        <location evidence="3">Cytoskeleton</location>
    </subcellularLocation>
    <text>Associated with microtubules (PubMed:15070402).</text>
</comment>
<comment type="tissue specificity">
    <text evidence="3 4 5">During embryonic development, expressed mainly in the neuroepithelial midline, urogenital apparatus and digits. Detected in adult white fat, liver, heart, brain and kidney. Expressed at very low levels in lactating mammary gland.</text>
</comment>
<comment type="induction">
    <text evidence="5">Down-regulated by fasting. Up-regulated by a carbohydrate-rich diet.</text>
</comment>
<comment type="similarity">
    <text evidence="7">Belongs to the SPOT14 family.</text>
</comment>
<comment type="caution">
    <text evidence="7">It is uncertain whether Met-1 or Met-2 is the initiator.</text>
</comment>
<comment type="sequence caution" evidence="7">
    <conflict type="erroneous initiation">
        <sequence resource="EMBL-CDS" id="AAP87014"/>
    </conflict>
</comment>
<keyword id="KW-0007">Acetylation</keyword>
<keyword id="KW-0963">Cytoplasm</keyword>
<keyword id="KW-0206">Cytoskeleton</keyword>
<keyword id="KW-0444">Lipid biosynthesis</keyword>
<keyword id="KW-0443">Lipid metabolism</keyword>
<keyword id="KW-0493">Microtubule</keyword>
<keyword id="KW-0539">Nucleus</keyword>
<keyword id="KW-0597">Phosphoprotein</keyword>
<keyword id="KW-1185">Reference proteome</keyword>
<organism>
    <name type="scientific">Mus musculus</name>
    <name type="common">Mouse</name>
    <dbReference type="NCBI Taxonomy" id="10090"/>
    <lineage>
        <taxon>Eukaryota</taxon>
        <taxon>Metazoa</taxon>
        <taxon>Chordata</taxon>
        <taxon>Craniata</taxon>
        <taxon>Vertebrata</taxon>
        <taxon>Euteleostomi</taxon>
        <taxon>Mammalia</taxon>
        <taxon>Eutheria</taxon>
        <taxon>Euarchontoglires</taxon>
        <taxon>Glires</taxon>
        <taxon>Rodentia</taxon>
        <taxon>Myomorpha</taxon>
        <taxon>Muroidea</taxon>
        <taxon>Muridae</taxon>
        <taxon>Murinae</taxon>
        <taxon>Mus</taxon>
        <taxon>Mus</taxon>
    </lineage>
</organism>
<proteinExistence type="evidence at protein level"/>
<feature type="chain" id="PRO_0000123778" description="Mid1-interacting protein 1">
    <location>
        <begin position="1"/>
        <end position="182"/>
    </location>
</feature>
<feature type="region of interest" description="Disordered" evidence="2">
    <location>
        <begin position="55"/>
        <end position="75"/>
    </location>
</feature>
<feature type="modified residue" description="N-acetylmethionine" evidence="1">
    <location>
        <position position="1"/>
    </location>
</feature>
<feature type="modified residue" description="Phosphoserine" evidence="9">
    <location>
        <position position="71"/>
    </location>
</feature>
<feature type="modified residue" description="Phosphoserine" evidence="8 9">
    <location>
        <position position="74"/>
    </location>
</feature>
<feature type="modified residue" description="Phosphoserine" evidence="1">
    <location>
        <position position="78"/>
    </location>
</feature>
<feature type="sequence conflict" description="In Ref. 1; BAC41039." evidence="7" ref="1">
    <original>F</original>
    <variation>V</variation>
    <location>
        <position position="15"/>
    </location>
</feature>
<accession>Q9CQ20</accession>
<accession>Q8BHT5</accession>
<protein>
    <recommendedName>
        <fullName>Mid1-interacting protein 1</fullName>
    </recommendedName>
    <alternativeName>
        <fullName>Gastrulation-specific G12-like protein</fullName>
    </alternativeName>
    <alternativeName>
        <fullName>Mid1-interacting G12-like protein</fullName>
    </alternativeName>
    <alternativeName>
        <fullName>Protein STRAIT11499 homolog</fullName>
    </alternativeName>
    <alternativeName>
        <fullName>Spot 14-related protein</fullName>
        <shortName>S14R</shortName>
        <shortName>Spot 14-R</shortName>
    </alternativeName>
</protein>
<dbReference type="EMBL" id="AY263385">
    <property type="protein sequence ID" value="AAP87014.1"/>
    <property type="status" value="ALT_INIT"/>
    <property type="molecule type" value="mRNA"/>
</dbReference>
<dbReference type="EMBL" id="AK014143">
    <property type="protein sequence ID" value="BAB29178.1"/>
    <property type="molecule type" value="mRNA"/>
</dbReference>
<dbReference type="EMBL" id="AK004021">
    <property type="protein sequence ID" value="BAB23129.1"/>
    <property type="molecule type" value="mRNA"/>
</dbReference>
<dbReference type="EMBL" id="AK090003">
    <property type="protein sequence ID" value="BAC41039.1"/>
    <property type="molecule type" value="mRNA"/>
</dbReference>
<dbReference type="EMBL" id="BC004014">
    <property type="protein sequence ID" value="AAH04014.1"/>
    <property type="molecule type" value="mRNA"/>
</dbReference>
<dbReference type="EMBL" id="BC010778">
    <property type="protein sequence ID" value="AAH10778.1"/>
    <property type="molecule type" value="mRNA"/>
</dbReference>
<dbReference type="EMBL" id="BC052899">
    <property type="protein sequence ID" value="AAH52899.1"/>
    <property type="molecule type" value="mRNA"/>
</dbReference>
<dbReference type="CCDS" id="CCDS30018.1"/>
<dbReference type="RefSeq" id="NP_001160107.1">
    <property type="nucleotide sequence ID" value="NM_001166635.1"/>
</dbReference>
<dbReference type="RefSeq" id="NP_080800.1">
    <property type="nucleotide sequence ID" value="NM_026524.4"/>
</dbReference>
<dbReference type="SMR" id="Q9CQ20"/>
<dbReference type="BioGRID" id="212621">
    <property type="interactions" value="2"/>
</dbReference>
<dbReference type="DIP" id="DIP-31345N"/>
<dbReference type="FunCoup" id="Q9CQ20">
    <property type="interactions" value="1608"/>
</dbReference>
<dbReference type="IntAct" id="Q9CQ20">
    <property type="interactions" value="8"/>
</dbReference>
<dbReference type="STRING" id="10090.ENSMUSP00000111186"/>
<dbReference type="iPTMnet" id="Q9CQ20"/>
<dbReference type="PhosphoSitePlus" id="Q9CQ20"/>
<dbReference type="jPOST" id="Q9CQ20"/>
<dbReference type="PaxDb" id="10090-ENSMUSP00000111186"/>
<dbReference type="ProteomicsDB" id="291986"/>
<dbReference type="Pumba" id="Q9CQ20"/>
<dbReference type="Antibodypedia" id="24940">
    <property type="antibodies" value="176 antibodies from 32 providers"/>
</dbReference>
<dbReference type="DNASU" id="68041"/>
<dbReference type="Ensembl" id="ENSMUST00000008179.7">
    <property type="protein sequence ID" value="ENSMUSP00000008179.7"/>
    <property type="gene ID" value="ENSMUSG00000008035.13"/>
</dbReference>
<dbReference type="Ensembl" id="ENSMUST00000115524.8">
    <property type="protein sequence ID" value="ENSMUSP00000111186.2"/>
    <property type="gene ID" value="ENSMUSG00000008035.13"/>
</dbReference>
<dbReference type="GeneID" id="68041"/>
<dbReference type="KEGG" id="mmu:68041"/>
<dbReference type="UCSC" id="uc009sqn.2">
    <property type="organism name" value="mouse"/>
</dbReference>
<dbReference type="AGR" id="MGI:1915291"/>
<dbReference type="CTD" id="58526"/>
<dbReference type="MGI" id="MGI:1915291">
    <property type="gene designation" value="Mid1ip1"/>
</dbReference>
<dbReference type="VEuPathDB" id="HostDB:ENSMUSG00000008035"/>
<dbReference type="eggNOG" id="ENOG502S0KR">
    <property type="taxonomic scope" value="Eukaryota"/>
</dbReference>
<dbReference type="GeneTree" id="ENSGT00500000044890"/>
<dbReference type="HOGENOM" id="CLU_066079_1_0_1"/>
<dbReference type="InParanoid" id="Q9CQ20"/>
<dbReference type="OMA" id="EEGNAWK"/>
<dbReference type="OrthoDB" id="5951908at2759"/>
<dbReference type="PhylomeDB" id="Q9CQ20"/>
<dbReference type="TreeFam" id="TF326826"/>
<dbReference type="Reactome" id="R-MMU-200425">
    <property type="pathway name" value="Carnitine shuttle"/>
</dbReference>
<dbReference type="BioGRID-ORCS" id="68041">
    <property type="hits" value="3 hits in 77 CRISPR screens"/>
</dbReference>
<dbReference type="PRO" id="PR:Q9CQ20"/>
<dbReference type="Proteomes" id="UP000000589">
    <property type="component" value="Chromosome X"/>
</dbReference>
<dbReference type="RNAct" id="Q9CQ20">
    <property type="molecule type" value="protein"/>
</dbReference>
<dbReference type="Bgee" id="ENSMUSG00000008035">
    <property type="expression patterns" value="Expressed in epithelium of stomach and 274 other cell types or tissues"/>
</dbReference>
<dbReference type="ExpressionAtlas" id="Q9CQ20">
    <property type="expression patterns" value="baseline and differential"/>
</dbReference>
<dbReference type="GO" id="GO:0005737">
    <property type="term" value="C:cytoplasm"/>
    <property type="evidence" value="ECO:0000314"/>
    <property type="project" value="MGI"/>
</dbReference>
<dbReference type="GO" id="GO:0005829">
    <property type="term" value="C:cytosol"/>
    <property type="evidence" value="ECO:0000314"/>
    <property type="project" value="UniProtKB"/>
</dbReference>
<dbReference type="GO" id="GO:0005874">
    <property type="term" value="C:microtubule"/>
    <property type="evidence" value="ECO:0007669"/>
    <property type="project" value="UniProtKB-KW"/>
</dbReference>
<dbReference type="GO" id="GO:0015630">
    <property type="term" value="C:microtubule cytoskeleton"/>
    <property type="evidence" value="ECO:0000314"/>
    <property type="project" value="MGI"/>
</dbReference>
<dbReference type="GO" id="GO:0005634">
    <property type="term" value="C:nucleus"/>
    <property type="evidence" value="ECO:0000314"/>
    <property type="project" value="MGI"/>
</dbReference>
<dbReference type="GO" id="GO:0032991">
    <property type="term" value="C:protein-containing complex"/>
    <property type="evidence" value="ECO:0000266"/>
    <property type="project" value="MGI"/>
</dbReference>
<dbReference type="GO" id="GO:0008047">
    <property type="term" value="F:enzyme activator activity"/>
    <property type="evidence" value="ECO:0000314"/>
    <property type="project" value="MGI"/>
</dbReference>
<dbReference type="GO" id="GO:0042802">
    <property type="term" value="F:identical protein binding"/>
    <property type="evidence" value="ECO:0000353"/>
    <property type="project" value="IntAct"/>
</dbReference>
<dbReference type="GO" id="GO:0055103">
    <property type="term" value="F:ligase regulator activity"/>
    <property type="evidence" value="ECO:0000314"/>
    <property type="project" value="MGI"/>
</dbReference>
<dbReference type="GO" id="GO:0006629">
    <property type="term" value="P:lipid metabolic process"/>
    <property type="evidence" value="ECO:0007669"/>
    <property type="project" value="UniProtKB-KW"/>
</dbReference>
<dbReference type="GO" id="GO:0007026">
    <property type="term" value="P:negative regulation of microtubule depolymerization"/>
    <property type="evidence" value="ECO:0000316"/>
    <property type="project" value="MGI"/>
</dbReference>
<dbReference type="GO" id="GO:0045723">
    <property type="term" value="P:positive regulation of fatty acid biosynthetic process"/>
    <property type="evidence" value="ECO:0000315"/>
    <property type="project" value="UniProtKB"/>
</dbReference>
<dbReference type="GO" id="GO:0051351">
    <property type="term" value="P:positive regulation of ligase activity"/>
    <property type="evidence" value="ECO:0000314"/>
    <property type="project" value="UniProtKB"/>
</dbReference>
<dbReference type="GO" id="GO:0051258">
    <property type="term" value="P:protein polymerization"/>
    <property type="evidence" value="ECO:0000314"/>
    <property type="project" value="UniProtKB"/>
</dbReference>
<dbReference type="GO" id="GO:0046890">
    <property type="term" value="P:regulation of lipid biosynthetic process"/>
    <property type="evidence" value="ECO:0000250"/>
    <property type="project" value="UniProtKB"/>
</dbReference>
<dbReference type="Gene3D" id="6.10.140.1610">
    <property type="match status" value="1"/>
</dbReference>
<dbReference type="InterPro" id="IPR053719">
    <property type="entry name" value="Lipogen_MT_Stabilize_sf"/>
</dbReference>
<dbReference type="InterPro" id="IPR009786">
    <property type="entry name" value="Spot_14"/>
</dbReference>
<dbReference type="PANTHER" id="PTHR14315:SF16">
    <property type="entry name" value="MID1-INTERACTING PROTEIN 1"/>
    <property type="match status" value="1"/>
</dbReference>
<dbReference type="PANTHER" id="PTHR14315">
    <property type="entry name" value="SPOT14 FAMILY MEMBER"/>
    <property type="match status" value="1"/>
</dbReference>
<dbReference type="Pfam" id="PF07084">
    <property type="entry name" value="Spot_14"/>
    <property type="match status" value="1"/>
</dbReference>
<sequence>MMQICDTYNQKHSLFNAMNRFIGAVNNMDQTVMVPSLLRDVPLSEPEIDEVSVEVGGSGGCLEERTTPAPSPGSANESFFAPSRDMYSHYVLLKSIRNDIEWGVLHQPSSPPAGSEESTWKPKDILVGLSHLESADAGEEDLEQQFHYHLRGLHTVLSKLTRKANILTNRYKQEIGFSNWGH</sequence>
<name>M1IP1_MOUSE</name>
<evidence type="ECO:0000250" key="1">
    <source>
        <dbReference type="UniProtKB" id="Q9NPA3"/>
    </source>
</evidence>
<evidence type="ECO:0000256" key="2">
    <source>
        <dbReference type="SAM" id="MobiDB-lite"/>
    </source>
</evidence>
<evidence type="ECO:0000269" key="3">
    <source>
    </source>
</evidence>
<evidence type="ECO:0000269" key="4">
    <source>
    </source>
</evidence>
<evidence type="ECO:0000269" key="5">
    <source>
    </source>
</evidence>
<evidence type="ECO:0000269" key="6">
    <source>
    </source>
</evidence>
<evidence type="ECO:0000305" key="7"/>
<evidence type="ECO:0007744" key="8">
    <source>
    </source>
</evidence>
<evidence type="ECO:0007744" key="9">
    <source>
    </source>
</evidence>
<reference key="1">
    <citation type="journal article" date="2004" name="BMC Cell Biol.">
        <title>Mig12, a novel Opitz syndrome gene product partner, is expressed in the embryonic ventral midline and co-operates with Mid1 to bundle and stabilize microtubules.</title>
        <authorList>
            <person name="Berti C."/>
            <person name="Fontanella B."/>
            <person name="Ferrentino R."/>
            <person name="Meroni G."/>
        </authorList>
    </citation>
    <scope>NUCLEOTIDE SEQUENCE [MRNA]</scope>
    <scope>FUNCTION</scope>
    <scope>SUBCELLULAR LOCATION</scope>
    <scope>TISSUE SPECIFICITY</scope>
    <scope>INTERACTION WITH MID1</scope>
</reference>
<reference key="2">
    <citation type="journal article" date="2005" name="Science">
        <title>The transcriptional landscape of the mammalian genome.</title>
        <authorList>
            <person name="Carninci P."/>
            <person name="Kasukawa T."/>
            <person name="Katayama S."/>
            <person name="Gough J."/>
            <person name="Frith M.C."/>
            <person name="Maeda N."/>
            <person name="Oyama R."/>
            <person name="Ravasi T."/>
            <person name="Lenhard B."/>
            <person name="Wells C."/>
            <person name="Kodzius R."/>
            <person name="Shimokawa K."/>
            <person name="Bajic V.B."/>
            <person name="Brenner S.E."/>
            <person name="Batalov S."/>
            <person name="Forrest A.R."/>
            <person name="Zavolan M."/>
            <person name="Davis M.J."/>
            <person name="Wilming L.G."/>
            <person name="Aidinis V."/>
            <person name="Allen J.E."/>
            <person name="Ambesi-Impiombato A."/>
            <person name="Apweiler R."/>
            <person name="Aturaliya R.N."/>
            <person name="Bailey T.L."/>
            <person name="Bansal M."/>
            <person name="Baxter L."/>
            <person name="Beisel K.W."/>
            <person name="Bersano T."/>
            <person name="Bono H."/>
            <person name="Chalk A.M."/>
            <person name="Chiu K.P."/>
            <person name="Choudhary V."/>
            <person name="Christoffels A."/>
            <person name="Clutterbuck D.R."/>
            <person name="Crowe M.L."/>
            <person name="Dalla E."/>
            <person name="Dalrymple B.P."/>
            <person name="de Bono B."/>
            <person name="Della Gatta G."/>
            <person name="di Bernardo D."/>
            <person name="Down T."/>
            <person name="Engstrom P."/>
            <person name="Fagiolini M."/>
            <person name="Faulkner G."/>
            <person name="Fletcher C.F."/>
            <person name="Fukushima T."/>
            <person name="Furuno M."/>
            <person name="Futaki S."/>
            <person name="Gariboldi M."/>
            <person name="Georgii-Hemming P."/>
            <person name="Gingeras T.R."/>
            <person name="Gojobori T."/>
            <person name="Green R.E."/>
            <person name="Gustincich S."/>
            <person name="Harbers M."/>
            <person name="Hayashi Y."/>
            <person name="Hensch T.K."/>
            <person name="Hirokawa N."/>
            <person name="Hill D."/>
            <person name="Huminiecki L."/>
            <person name="Iacono M."/>
            <person name="Ikeo K."/>
            <person name="Iwama A."/>
            <person name="Ishikawa T."/>
            <person name="Jakt M."/>
            <person name="Kanapin A."/>
            <person name="Katoh M."/>
            <person name="Kawasawa Y."/>
            <person name="Kelso J."/>
            <person name="Kitamura H."/>
            <person name="Kitano H."/>
            <person name="Kollias G."/>
            <person name="Krishnan S.P."/>
            <person name="Kruger A."/>
            <person name="Kummerfeld S.K."/>
            <person name="Kurochkin I.V."/>
            <person name="Lareau L.F."/>
            <person name="Lazarevic D."/>
            <person name="Lipovich L."/>
            <person name="Liu J."/>
            <person name="Liuni S."/>
            <person name="McWilliam S."/>
            <person name="Madan Babu M."/>
            <person name="Madera M."/>
            <person name="Marchionni L."/>
            <person name="Matsuda H."/>
            <person name="Matsuzawa S."/>
            <person name="Miki H."/>
            <person name="Mignone F."/>
            <person name="Miyake S."/>
            <person name="Morris K."/>
            <person name="Mottagui-Tabar S."/>
            <person name="Mulder N."/>
            <person name="Nakano N."/>
            <person name="Nakauchi H."/>
            <person name="Ng P."/>
            <person name="Nilsson R."/>
            <person name="Nishiguchi S."/>
            <person name="Nishikawa S."/>
            <person name="Nori F."/>
            <person name="Ohara O."/>
            <person name="Okazaki Y."/>
            <person name="Orlando V."/>
            <person name="Pang K.C."/>
            <person name="Pavan W.J."/>
            <person name="Pavesi G."/>
            <person name="Pesole G."/>
            <person name="Petrovsky N."/>
            <person name="Piazza S."/>
            <person name="Reed J."/>
            <person name="Reid J.F."/>
            <person name="Ring B.Z."/>
            <person name="Ringwald M."/>
            <person name="Rost B."/>
            <person name="Ruan Y."/>
            <person name="Salzberg S.L."/>
            <person name="Sandelin A."/>
            <person name="Schneider C."/>
            <person name="Schoenbach C."/>
            <person name="Sekiguchi K."/>
            <person name="Semple C.A."/>
            <person name="Seno S."/>
            <person name="Sessa L."/>
            <person name="Sheng Y."/>
            <person name="Shibata Y."/>
            <person name="Shimada H."/>
            <person name="Shimada K."/>
            <person name="Silva D."/>
            <person name="Sinclair B."/>
            <person name="Sperling S."/>
            <person name="Stupka E."/>
            <person name="Sugiura K."/>
            <person name="Sultana R."/>
            <person name="Takenaka Y."/>
            <person name="Taki K."/>
            <person name="Tammoja K."/>
            <person name="Tan S.L."/>
            <person name="Tang S."/>
            <person name="Taylor M.S."/>
            <person name="Tegner J."/>
            <person name="Teichmann S.A."/>
            <person name="Ueda H.R."/>
            <person name="van Nimwegen E."/>
            <person name="Verardo R."/>
            <person name="Wei C.L."/>
            <person name="Yagi K."/>
            <person name="Yamanishi H."/>
            <person name="Zabarovsky E."/>
            <person name="Zhu S."/>
            <person name="Zimmer A."/>
            <person name="Hide W."/>
            <person name="Bult C."/>
            <person name="Grimmond S.M."/>
            <person name="Teasdale R.D."/>
            <person name="Liu E.T."/>
            <person name="Brusic V."/>
            <person name="Quackenbush J."/>
            <person name="Wahlestedt C."/>
            <person name="Mattick J.S."/>
            <person name="Hume D.A."/>
            <person name="Kai C."/>
            <person name="Sasaki D."/>
            <person name="Tomaru Y."/>
            <person name="Fukuda S."/>
            <person name="Kanamori-Katayama M."/>
            <person name="Suzuki M."/>
            <person name="Aoki J."/>
            <person name="Arakawa T."/>
            <person name="Iida J."/>
            <person name="Imamura K."/>
            <person name="Itoh M."/>
            <person name="Kato T."/>
            <person name="Kawaji H."/>
            <person name="Kawagashira N."/>
            <person name="Kawashima T."/>
            <person name="Kojima M."/>
            <person name="Kondo S."/>
            <person name="Konno H."/>
            <person name="Nakano K."/>
            <person name="Ninomiya N."/>
            <person name="Nishio T."/>
            <person name="Okada M."/>
            <person name="Plessy C."/>
            <person name="Shibata K."/>
            <person name="Shiraki T."/>
            <person name="Suzuki S."/>
            <person name="Tagami M."/>
            <person name="Waki K."/>
            <person name="Watahiki A."/>
            <person name="Okamura-Oho Y."/>
            <person name="Suzuki H."/>
            <person name="Kawai J."/>
            <person name="Hayashizaki Y."/>
        </authorList>
    </citation>
    <scope>NUCLEOTIDE SEQUENCE [LARGE SCALE MRNA]</scope>
    <source>
        <strain>C57BL/6J</strain>
        <tissue>Embryo</tissue>
        <tissue>Embryonic head</tissue>
    </source>
</reference>
<reference key="3">
    <citation type="journal article" date="2004" name="Genome Res.">
        <title>The status, quality, and expansion of the NIH full-length cDNA project: the Mammalian Gene Collection (MGC).</title>
        <authorList>
            <consortium name="The MGC Project Team"/>
        </authorList>
    </citation>
    <scope>NUCLEOTIDE SEQUENCE [LARGE SCALE MRNA]</scope>
    <source>
        <strain>FVB/N</strain>
        <tissue>Colon</tissue>
        <tissue>Mesenchymal cell</tissue>
    </source>
</reference>
<reference key="4">
    <citation type="journal article" date="2005" name="Endocrinology">
        <title>The Spot 14 protein is required for de novo lipid synthesis in the lactating mammary gland.</title>
        <authorList>
            <person name="Zhu Q."/>
            <person name="Anderson G.W."/>
            <person name="Mucha G.T."/>
            <person name="Parks E.J."/>
            <person name="Metkowski J.K."/>
            <person name="Mariash C.N."/>
        </authorList>
    </citation>
    <scope>IDENTIFICATION</scope>
    <scope>TISSUE SPECIFICITY</scope>
</reference>
<reference key="5">
    <citation type="journal article" date="2007" name="Proc. Natl. Acad. Sci. U.S.A.">
        <title>Large-scale phosphorylation analysis of mouse liver.</title>
        <authorList>
            <person name="Villen J."/>
            <person name="Beausoleil S.A."/>
            <person name="Gerber S.A."/>
            <person name="Gygi S.P."/>
        </authorList>
    </citation>
    <scope>PHOSPHORYLATION [LARGE SCALE ANALYSIS] AT SER-74</scope>
    <scope>IDENTIFICATION BY MASS SPECTROMETRY [LARGE SCALE ANALYSIS]</scope>
    <source>
        <tissue>Liver</tissue>
    </source>
</reference>
<reference key="6">
    <citation type="journal article" date="2010" name="Cell">
        <title>A tissue-specific atlas of mouse protein phosphorylation and expression.</title>
        <authorList>
            <person name="Huttlin E.L."/>
            <person name="Jedrychowski M.P."/>
            <person name="Elias J.E."/>
            <person name="Goswami T."/>
            <person name="Rad R."/>
            <person name="Beausoleil S.A."/>
            <person name="Villen J."/>
            <person name="Haas W."/>
            <person name="Sowa M.E."/>
            <person name="Gygi S.P."/>
        </authorList>
    </citation>
    <scope>PHOSPHORYLATION [LARGE SCALE ANALYSIS] AT SER-71 AND SER-74</scope>
    <scope>IDENTIFICATION BY MASS SPECTROMETRY [LARGE SCALE ANALYSIS]</scope>
    <source>
        <tissue>Brain</tissue>
        <tissue>Brown adipose tissue</tissue>
        <tissue>Kidney</tissue>
        <tissue>Liver</tissue>
        <tissue>Lung</tissue>
        <tissue>Testis</tissue>
    </source>
</reference>
<reference key="7">
    <citation type="journal article" date="2010" name="Proc. Natl. Acad. Sci. U.S.A.">
        <title>Induced polymerization of mammalian acetyl-CoA carboxylase by MIG12 provides a tertiary level of regulation of fatty acid synthesis.</title>
        <authorList>
            <person name="Kim C.W."/>
            <person name="Moon Y.A."/>
            <person name="Park S.W."/>
            <person name="Cheng D."/>
            <person name="Kwon H.J."/>
            <person name="Horton J.D."/>
        </authorList>
    </citation>
    <scope>FUNCTION</scope>
    <scope>INTERACTION WITH ACACA AND ACACB</scope>
    <scope>SUBUNIT</scope>
    <scope>INDUCTION</scope>
    <scope>SUBCELLULAR LOCATION</scope>
    <scope>TISSUE SPECIFICITY</scope>
</reference>
<reference key="8">
    <citation type="journal article" date="2010" name="Proc. Natl. Acad. Sci. U.S.A.">
        <title>Crystal structure of Spot 14, a modulator of fatty acid synthesis.</title>
        <authorList>
            <person name="Colbert C.L."/>
            <person name="Kim C.W."/>
            <person name="Moon Y.A."/>
            <person name="Henry L."/>
            <person name="Palnitkar M."/>
            <person name="McKean W.B."/>
            <person name="Fitzgerald K."/>
            <person name="Deisenhofer J."/>
            <person name="Horton J.D."/>
            <person name="Kwon H.J."/>
        </authorList>
    </citation>
    <scope>FUNCTION</scope>
    <scope>INTERACTION WITH THRSP AND ACACA</scope>
    <scope>SUBCELLULAR LOCATION</scope>
</reference>
<gene>
    <name type="primary">Mid1ip1</name>
    <name type="synonym">Mig12</name>
</gene>